<evidence type="ECO:0000255" key="1">
    <source>
        <dbReference type="HAMAP-Rule" id="MF_00948"/>
    </source>
</evidence>
<gene>
    <name evidence="1" type="primary">nusG</name>
    <name type="ordered locus">RBE_1158</name>
</gene>
<feature type="chain" id="PRO_0000288746" description="Transcription termination/antitermination protein NusG">
    <location>
        <begin position="1"/>
        <end position="190"/>
    </location>
</feature>
<feature type="domain" description="KOW" evidence="1">
    <location>
        <begin position="138"/>
        <end position="166"/>
    </location>
</feature>
<dbReference type="EMBL" id="CP000087">
    <property type="protein sequence ID" value="ABE05239.1"/>
    <property type="molecule type" value="Genomic_DNA"/>
</dbReference>
<dbReference type="RefSeq" id="WP_011477817.1">
    <property type="nucleotide sequence ID" value="NC_007940.1"/>
</dbReference>
<dbReference type="SMR" id="Q1RHC5"/>
<dbReference type="KEGG" id="rbe:RBE_1158"/>
<dbReference type="eggNOG" id="COG0250">
    <property type="taxonomic scope" value="Bacteria"/>
</dbReference>
<dbReference type="HOGENOM" id="CLU_067287_1_0_5"/>
<dbReference type="OrthoDB" id="9809075at2"/>
<dbReference type="Proteomes" id="UP000001951">
    <property type="component" value="Chromosome"/>
</dbReference>
<dbReference type="GO" id="GO:0005829">
    <property type="term" value="C:cytosol"/>
    <property type="evidence" value="ECO:0007669"/>
    <property type="project" value="TreeGrafter"/>
</dbReference>
<dbReference type="GO" id="GO:0006353">
    <property type="term" value="P:DNA-templated transcription termination"/>
    <property type="evidence" value="ECO:0007669"/>
    <property type="project" value="UniProtKB-UniRule"/>
</dbReference>
<dbReference type="GO" id="GO:0032784">
    <property type="term" value="P:regulation of DNA-templated transcription elongation"/>
    <property type="evidence" value="ECO:0007669"/>
    <property type="project" value="InterPro"/>
</dbReference>
<dbReference type="GO" id="GO:0031564">
    <property type="term" value="P:transcription antitermination"/>
    <property type="evidence" value="ECO:0007669"/>
    <property type="project" value="UniProtKB-UniRule"/>
</dbReference>
<dbReference type="GO" id="GO:0140673">
    <property type="term" value="P:transcription elongation-coupled chromatin remodeling"/>
    <property type="evidence" value="ECO:0007669"/>
    <property type="project" value="InterPro"/>
</dbReference>
<dbReference type="CDD" id="cd06091">
    <property type="entry name" value="KOW_NusG"/>
    <property type="match status" value="1"/>
</dbReference>
<dbReference type="CDD" id="cd09891">
    <property type="entry name" value="NGN_Bact_1"/>
    <property type="match status" value="1"/>
</dbReference>
<dbReference type="FunFam" id="2.30.30.30:FF:000002">
    <property type="entry name" value="Transcription termination/antitermination factor NusG"/>
    <property type="match status" value="1"/>
</dbReference>
<dbReference type="Gene3D" id="2.30.30.30">
    <property type="match status" value="1"/>
</dbReference>
<dbReference type="Gene3D" id="3.30.70.940">
    <property type="entry name" value="NusG, N-terminal domain"/>
    <property type="match status" value="1"/>
</dbReference>
<dbReference type="HAMAP" id="MF_00948">
    <property type="entry name" value="NusG"/>
    <property type="match status" value="1"/>
</dbReference>
<dbReference type="InterPro" id="IPR005824">
    <property type="entry name" value="KOW"/>
</dbReference>
<dbReference type="InterPro" id="IPR047050">
    <property type="entry name" value="NGN"/>
</dbReference>
<dbReference type="InterPro" id="IPR006645">
    <property type="entry name" value="NGN-like_dom"/>
</dbReference>
<dbReference type="InterPro" id="IPR036735">
    <property type="entry name" value="NGN_dom_sf"/>
</dbReference>
<dbReference type="InterPro" id="IPR043425">
    <property type="entry name" value="NusG-like"/>
</dbReference>
<dbReference type="InterPro" id="IPR014722">
    <property type="entry name" value="Rib_uL2_dom2"/>
</dbReference>
<dbReference type="InterPro" id="IPR001062">
    <property type="entry name" value="Transcrpt_antiterm_NusG"/>
</dbReference>
<dbReference type="InterPro" id="IPR015869">
    <property type="entry name" value="Transcrpt_antiterm_NusG_bac_CS"/>
</dbReference>
<dbReference type="InterPro" id="IPR008991">
    <property type="entry name" value="Translation_prot_SH3-like_sf"/>
</dbReference>
<dbReference type="NCBIfam" id="TIGR00922">
    <property type="entry name" value="nusG"/>
    <property type="match status" value="1"/>
</dbReference>
<dbReference type="PANTHER" id="PTHR30265">
    <property type="entry name" value="RHO-INTERACTING TRANSCRIPTION TERMINATION FACTOR NUSG"/>
    <property type="match status" value="1"/>
</dbReference>
<dbReference type="PANTHER" id="PTHR30265:SF2">
    <property type="entry name" value="TRANSCRIPTION TERMINATION_ANTITERMINATION PROTEIN NUSG"/>
    <property type="match status" value="1"/>
</dbReference>
<dbReference type="Pfam" id="PF00467">
    <property type="entry name" value="KOW"/>
    <property type="match status" value="1"/>
</dbReference>
<dbReference type="Pfam" id="PF02357">
    <property type="entry name" value="NusG"/>
    <property type="match status" value="1"/>
</dbReference>
<dbReference type="PRINTS" id="PR00338">
    <property type="entry name" value="NUSGTNSCPFCT"/>
</dbReference>
<dbReference type="SMART" id="SM00739">
    <property type="entry name" value="KOW"/>
    <property type="match status" value="1"/>
</dbReference>
<dbReference type="SMART" id="SM00738">
    <property type="entry name" value="NGN"/>
    <property type="match status" value="1"/>
</dbReference>
<dbReference type="SUPFAM" id="SSF82679">
    <property type="entry name" value="N-utilization substance G protein NusG, N-terminal domain"/>
    <property type="match status" value="1"/>
</dbReference>
<dbReference type="SUPFAM" id="SSF50104">
    <property type="entry name" value="Translation proteins SH3-like domain"/>
    <property type="match status" value="1"/>
</dbReference>
<dbReference type="PROSITE" id="PS01014">
    <property type="entry name" value="NUSG"/>
    <property type="match status" value="1"/>
</dbReference>
<accession>Q1RHC5</accession>
<keyword id="KW-0804">Transcription</keyword>
<keyword id="KW-0889">Transcription antitermination</keyword>
<keyword id="KW-0805">Transcription regulation</keyword>
<keyword id="KW-0806">Transcription termination</keyword>
<comment type="function">
    <text evidence="1">Participates in transcription elongation, termination and antitermination.</text>
</comment>
<comment type="similarity">
    <text evidence="1">Belongs to the NusG family.</text>
</comment>
<proteinExistence type="inferred from homology"/>
<reference key="1">
    <citation type="journal article" date="2006" name="PLoS Genet.">
        <title>Genome sequence of Rickettsia bellii illuminates the role of amoebae in gene exchanges between intracellular pathogens.</title>
        <authorList>
            <person name="Ogata H."/>
            <person name="La Scola B."/>
            <person name="Audic S."/>
            <person name="Renesto P."/>
            <person name="Blanc G."/>
            <person name="Robert C."/>
            <person name="Fournier P.-E."/>
            <person name="Claverie J.-M."/>
            <person name="Raoult D."/>
        </authorList>
    </citation>
    <scope>NUCLEOTIDE SEQUENCE [LARGE SCALE GENOMIC DNA]</scope>
    <source>
        <strain>RML369-C</strain>
    </source>
</reference>
<organism>
    <name type="scientific">Rickettsia bellii (strain RML369-C)</name>
    <dbReference type="NCBI Taxonomy" id="336407"/>
    <lineage>
        <taxon>Bacteria</taxon>
        <taxon>Pseudomonadati</taxon>
        <taxon>Pseudomonadota</taxon>
        <taxon>Alphaproteobacteria</taxon>
        <taxon>Rickettsiales</taxon>
        <taxon>Rickettsiaceae</taxon>
        <taxon>Rickettsieae</taxon>
        <taxon>Rickettsia</taxon>
        <taxon>belli group</taxon>
    </lineage>
</organism>
<protein>
    <recommendedName>
        <fullName evidence="1">Transcription termination/antitermination protein NusG</fullName>
    </recommendedName>
</protein>
<name>NUSG_RICBR</name>
<sequence>MAEQNIDDILSNSEKDTKKWYVIHTASGAENRIKRIMLERISKQKMSDFFDDILVPVFGVSEVKRSKNVKVEKKLMPSYILIKMNMTDKSWHLVKNIPGVTGFLGSKTTPKALTESEIQNIRLETEAKEAKDAKLYEVGEIVTVTEGPFETFTGTVEEVDQEKARLKVSVSIFGKATPIELSFTQVKKND</sequence>